<dbReference type="EMBL" id="FJ360839">
    <property type="protein sequence ID" value="ACJ23159.1"/>
    <property type="molecule type" value="mRNA"/>
</dbReference>
<dbReference type="SMR" id="B8XH50"/>
<dbReference type="GO" id="GO:0005576">
    <property type="term" value="C:extracellular region"/>
    <property type="evidence" value="ECO:0007669"/>
    <property type="project" value="UniProtKB-SubCell"/>
</dbReference>
<dbReference type="GO" id="GO:0016020">
    <property type="term" value="C:membrane"/>
    <property type="evidence" value="ECO:0007669"/>
    <property type="project" value="UniProtKB-KW"/>
</dbReference>
<dbReference type="GO" id="GO:0044218">
    <property type="term" value="C:other organism cell membrane"/>
    <property type="evidence" value="ECO:0007669"/>
    <property type="project" value="UniProtKB-KW"/>
</dbReference>
<dbReference type="GO" id="GO:0042742">
    <property type="term" value="P:defense response to bacterium"/>
    <property type="evidence" value="ECO:0007669"/>
    <property type="project" value="UniProtKB-KW"/>
</dbReference>
<keyword id="KW-0027">Amidation</keyword>
<keyword id="KW-0044">Antibiotic</keyword>
<keyword id="KW-0929">Antimicrobial</keyword>
<keyword id="KW-0165">Cleavage on pair of basic residues</keyword>
<keyword id="KW-0472">Membrane</keyword>
<keyword id="KW-0964">Secreted</keyword>
<keyword id="KW-0732">Signal</keyword>
<keyword id="KW-1052">Target cell membrane</keyword>
<keyword id="KW-1053">Target membrane</keyword>
<keyword id="KW-0812">Transmembrane</keyword>
<organism>
    <name type="scientific">Buthus israelis</name>
    <name type="common">Israeli scorpion</name>
    <name type="synonym">Buthus occitanus israelis</name>
    <dbReference type="NCBI Taxonomy" id="2899555"/>
    <lineage>
        <taxon>Eukaryota</taxon>
        <taxon>Metazoa</taxon>
        <taxon>Ecdysozoa</taxon>
        <taxon>Arthropoda</taxon>
        <taxon>Chelicerata</taxon>
        <taxon>Arachnida</taxon>
        <taxon>Scorpiones</taxon>
        <taxon>Buthida</taxon>
        <taxon>Buthoidea</taxon>
        <taxon>Buthidae</taxon>
        <taxon>Buthus</taxon>
    </lineage>
</organism>
<name>NDB4_BUTIS</name>
<protein>
    <recommendedName>
        <fullName evidence="2">Amphipathic peptide Tx348</fullName>
        <shortName evidence="2">BoiTx348</shortName>
    </recommendedName>
</protein>
<evidence type="ECO:0000250" key="1"/>
<evidence type="ECO:0000303" key="2">
    <source ref="1"/>
</evidence>
<evidence type="ECO:0000305" key="3"/>
<accession>B8XH50</accession>
<feature type="signal peptide" evidence="1">
    <location>
        <begin position="1"/>
        <end position="23"/>
    </location>
</feature>
<feature type="peptide" id="PRO_0000418795" description="Amphipathic peptide Tx348">
    <location>
        <begin position="24"/>
        <end position="33"/>
    </location>
</feature>
<feature type="propeptide" id="PRO_0000418796" evidence="1">
    <location>
        <begin position="37"/>
        <end position="67"/>
    </location>
</feature>
<feature type="modified residue" description="Phenylalanine amide" evidence="1">
    <location>
        <position position="33"/>
    </location>
</feature>
<comment type="function">
    <text evidence="1">Amphipathic peptide that has antibacterial activities.</text>
</comment>
<comment type="subcellular location">
    <subcellularLocation>
        <location evidence="1">Secreted</location>
    </subcellularLocation>
    <subcellularLocation>
        <location evidence="1">Target cell membrane</location>
    </subcellularLocation>
    <text evidence="1">Forms an alpha-helical membrane channel in the prey.</text>
</comment>
<comment type="tissue specificity">
    <text>Expressed by the venom gland.</text>
</comment>
<comment type="similarity">
    <text evidence="3">Belongs to the non-disulfide-bridged peptide (NDBP) superfamily. Short antimicrobial peptide (group 4) family.</text>
</comment>
<sequence>MKSQAFFLLFLVVLLLATTQSEAFIMDLLGKIFGRRSMRNMDTMKYLYDPSLSAADLKTLQKLMENY</sequence>
<reference key="1">
    <citation type="submission" date="2008-10" db="EMBL/GenBank/DDBJ databases">
        <title>Buthus occitanus israelis scorpion toxin.</title>
        <authorList>
            <person name="Zilberberg N."/>
            <person name="Kozminsky-Atias A."/>
        </authorList>
    </citation>
    <scope>NUCLEOTIDE SEQUENCE [MRNA]</scope>
</reference>
<proteinExistence type="evidence at transcript level"/>